<sequence>MEPENYLAWLARDIVRNLSYTSLVYNNPKVAIVELLDNKEAFFTYEKEQKTPEALINYIDSIVKSSISVEDKIEALLKIRYISVYVDDKSDKRDIVLQLLNRTIKKIESKTKISNELNDAINAITIESRNWKIQNSESFKPYHYNQLVSDFLKYNEFEILEGTDPLKWKSDTLQGLSPNYNHRTHTLISSIIYATSVRFDNYNDEQLQVLLYLFSIIKTNYVNGYLEILPNRKWSHSLADLRENKSIMMYSAKIIHASCAMISILHAVPIDYFFLAQIIASFSEIPAHAAKQLSSPMTLYIGIAQLRSNIVVSTKIAAESVATESPNISRLEESQLREWEQEMNEYPFQSSRMVRMMKKNIFDVSVDVFYAIFNCFSATFHVGHRIDNPQDAIEAQVKVEYTSDVDKEMYDQYYFLLKRMLTDQLAEYAEEMYFKYNSDVTAESLAAMANSSNGYSRSVTFIDREIKTTKKMLHLDDDLSKNLNFTNIGEQIKKGIPMGTRNVPARQTRGIFILSWQVAAIQHTIAEFLYKKAKKGGFGATFAEAYVSKAATLTYGILAEATSKADQLILYTDVSQWDASQHNTEPYRSAWINAIKEARTKYKINYNQEPVVLGMNVLDKMIEIQEALLNSNLIVESQGSKRQPLRIKYHGVASGEKTTKIGNSFANVALITTVFNNLTNTMPSIRVNHMRVDGDDNVVTMYTANRIDEVQENIKEKYKRMNAKVKALASYTGLEMAKRFIICGKIFERGAISIFTAERPYGTDLSVQSTTGSLIYSAAVNAYRGFGDDYLNFMTDVLVPPSASVKITGRLRSLLSPVTLYSTGPLSFEITPYGLGGRMRLFSLSKENMELYKILTSSLAISIQPDEIKKYSSTPQFKARVDRMISSVQIAMKSEAKIITSILRDKEEQKTLGVPNVATAKNRQQIDKARKTLSLPKEILPKVTKYYPEEIFHLILRNSTLTIPKLNTMTKVYMNNSVNITKLQQQIGVRVSSGIQVHKPINTLLKLVEKHSPIKISPSDLILYSKKYDLTNLNGKKQFLMDLGISGNELRFYLNSKLLFHDLLLSKYDKLYEAPGFGATQLNALPLDLTAAEKVFSIKLNLPNTYYELLMLVLLYEYVNFVMFTGNTFRAVCIPESQTINAKLVKTIMTMIDNIQLDTVMFSDNIF</sequence>
<accession>A9Q1K7</accession>
<reference key="1">
    <citation type="journal article" date="2008" name="J. Med. Virol.">
        <title>Whole genomic characterization of a human rotavirus strain B219 belonging to a novel group of the genus Rotavirus.</title>
        <authorList>
            <person name="Nagashima S."/>
            <person name="Kobayashi N."/>
            <person name="Ishino M."/>
            <person name="Alam M.M."/>
            <person name="Ahmed M.U."/>
            <person name="Paul S.K."/>
            <person name="Ganesh B."/>
            <person name="Chawla-Sarkar M."/>
            <person name="Krishnan T."/>
            <person name="Naik T.N."/>
            <person name="Wang Y.-H."/>
        </authorList>
    </citation>
    <scope>NUCLEOTIDE SEQUENCE [MRNA]</scope>
</reference>
<evidence type="ECO:0000250" key="1"/>
<evidence type="ECO:0000255" key="2">
    <source>
        <dbReference type="PROSITE-ProRule" id="PRU00539"/>
    </source>
</evidence>
<evidence type="ECO:0000305" key="3"/>
<dbReference type="EC" id="2.7.7.48"/>
<dbReference type="EMBL" id="EF453355">
    <property type="protein sequence ID" value="ABR32122.1"/>
    <property type="molecule type" value="mRNA"/>
</dbReference>
<dbReference type="SMR" id="A9Q1K7"/>
<dbReference type="Proteomes" id="UP000174021">
    <property type="component" value="Genome"/>
</dbReference>
<dbReference type="GO" id="GO:0044423">
    <property type="term" value="C:virion component"/>
    <property type="evidence" value="ECO:0007669"/>
    <property type="project" value="UniProtKB-KW"/>
</dbReference>
<dbReference type="GO" id="GO:0000166">
    <property type="term" value="F:nucleotide binding"/>
    <property type="evidence" value="ECO:0007669"/>
    <property type="project" value="UniProtKB-KW"/>
</dbReference>
<dbReference type="GO" id="GO:0003723">
    <property type="term" value="F:RNA binding"/>
    <property type="evidence" value="ECO:0007669"/>
    <property type="project" value="UniProtKB-KW"/>
</dbReference>
<dbReference type="GO" id="GO:0003968">
    <property type="term" value="F:RNA-directed RNA polymerase activity"/>
    <property type="evidence" value="ECO:0007669"/>
    <property type="project" value="UniProtKB-KW"/>
</dbReference>
<dbReference type="GO" id="GO:0006351">
    <property type="term" value="P:DNA-templated transcription"/>
    <property type="evidence" value="ECO:0007669"/>
    <property type="project" value="InterPro"/>
</dbReference>
<dbReference type="GO" id="GO:0019079">
    <property type="term" value="P:viral genome replication"/>
    <property type="evidence" value="ECO:0007669"/>
    <property type="project" value="InterPro"/>
</dbReference>
<dbReference type="Gene3D" id="1.10.357.80">
    <property type="match status" value="1"/>
</dbReference>
<dbReference type="Gene3D" id="3.30.70.2480">
    <property type="match status" value="1"/>
</dbReference>
<dbReference type="InterPro" id="IPR043502">
    <property type="entry name" value="DNA/RNA_pol_sf"/>
</dbReference>
<dbReference type="InterPro" id="IPR001795">
    <property type="entry name" value="RNA-dir_pol_luteovirus"/>
</dbReference>
<dbReference type="InterPro" id="IPR007097">
    <property type="entry name" value="RNA-dir_pol_reovirus"/>
</dbReference>
<dbReference type="Pfam" id="PF02123">
    <property type="entry name" value="RdRP_4"/>
    <property type="match status" value="1"/>
</dbReference>
<dbReference type="SUPFAM" id="SSF56672">
    <property type="entry name" value="DNA/RNA polymerases"/>
    <property type="match status" value="1"/>
</dbReference>
<dbReference type="PROSITE" id="PS50523">
    <property type="entry name" value="RDRP_DSRNA_REO"/>
    <property type="match status" value="1"/>
</dbReference>
<organism>
    <name type="scientific">Rotavirus X (isolate RVX/Human/Bangladesh/NADRV-B219/2002/GXP[X])</name>
    <name type="common">RV ADRV-N</name>
    <name type="synonym">Rotavirus (isolate novel adult diarrhea rotavirus-B219)</name>
    <dbReference type="NCBI Taxonomy" id="348136"/>
    <lineage>
        <taxon>Viruses</taxon>
        <taxon>Riboviria</taxon>
        <taxon>Orthornavirae</taxon>
        <taxon>Duplornaviricota</taxon>
        <taxon>Resentoviricetes</taxon>
        <taxon>Reovirales</taxon>
        <taxon>Sedoreoviridae</taxon>
        <taxon>Rotavirus</taxon>
    </lineage>
</organism>
<name>RDRP_ROTB2</name>
<protein>
    <recommendedName>
        <fullName>RNA-directed RNA polymerase</fullName>
        <ecNumber>2.7.7.48</ecNumber>
    </recommendedName>
    <alternativeName>
        <fullName>Protein VP1</fullName>
    </alternativeName>
</protein>
<proteinExistence type="evidence at transcript level"/>
<keyword id="KW-0547">Nucleotide-binding</keyword>
<keyword id="KW-0548">Nucleotidyltransferase</keyword>
<keyword id="KW-0694">RNA-binding</keyword>
<keyword id="KW-0696">RNA-directed RNA polymerase</keyword>
<keyword id="KW-0808">Transferase</keyword>
<keyword id="KW-0693">Viral RNA replication</keyword>
<keyword id="KW-0946">Virion</keyword>
<comment type="function">
    <text evidence="2">RNA-directed RNA polymerase that is involved in both transcription and genome replication. Together with VP3 capping enzyme, forms an enzyme complex positioned near the channels situated at each of the five-fold vertices of the core. Following infection, the outermost layer of the virus is lost, leaving a double-layered particle (DLP) made up of the core and VP6 shell. VP1 then catalyzes the transcription of fully conservative plus-strand genomic RNAs that are extruded through the DLP's channels into the cytoplasm where they function as mRNAs for translation of viral proteins. One copy of each of the viral (+)RNAs is also recruited during core assembly, together with newly synthesized polymerase complexes and VP2. The polymerase of these novo-formed particles catalyzes the synthesis of complementary minus-strands leading to dsDNA formation. To do so, the polymerase specifically recognizes conserved 3' sequence(s) in plus-strand RNA templates. Once dsRNA synthesis is complete, the polymerase switches to the transcriptional mode, thus providing secondary transcription (By similarity).</text>
</comment>
<comment type="catalytic activity">
    <reaction evidence="2">
        <text>RNA(n) + a ribonucleoside 5'-triphosphate = RNA(n+1) + diphosphate</text>
        <dbReference type="Rhea" id="RHEA:21248"/>
        <dbReference type="Rhea" id="RHEA-COMP:14527"/>
        <dbReference type="Rhea" id="RHEA-COMP:17342"/>
        <dbReference type="ChEBI" id="CHEBI:33019"/>
        <dbReference type="ChEBI" id="CHEBI:61557"/>
        <dbReference type="ChEBI" id="CHEBI:140395"/>
        <dbReference type="EC" id="2.7.7.48"/>
    </reaction>
</comment>
<comment type="subunit">
    <text evidence="1 3">Interacts with VP3 (Potential). Interacts with VP2 (Potential). Interacts with NSP5; this interaction is probably necessary for the formation of functional virus factories (By similarity).</text>
</comment>
<comment type="subcellular location">
    <subcellularLocation>
        <location evidence="3">Virion</location>
    </subcellularLocation>
    <text evidence="1">Attached inside the inner capsid as a minor component. Also found in spherical cytoplasmic structures, called virus factories, that appear early after infection and are the site of viral replication and packaging (By similarity).</text>
</comment>
<comment type="similarity">
    <text evidence="3">Belongs to the reoviridae RNA-directed RNA polymerase family.</text>
</comment>
<feature type="chain" id="PRO_0000369830" description="RNA-directed RNA polymerase">
    <location>
        <begin position="1"/>
        <end position="1167"/>
    </location>
</feature>
<feature type="domain" description="RdRp catalytic" evidence="2">
    <location>
        <begin position="553"/>
        <end position="735"/>
    </location>
</feature>
<organismHost>
    <name type="scientific">Homo sapiens</name>
    <name type="common">Human</name>
    <dbReference type="NCBI Taxonomy" id="9606"/>
</organismHost>